<accession>A9HWD9</accession>
<feature type="chain" id="PRO_1000094673" description="UDP-N-acetylglucosamine 1-carboxyvinyltransferase">
    <location>
        <begin position="1"/>
        <end position="422"/>
    </location>
</feature>
<feature type="active site" description="Proton donor" evidence="1">
    <location>
        <position position="117"/>
    </location>
</feature>
<feature type="binding site" evidence="1">
    <location>
        <begin position="22"/>
        <end position="23"/>
    </location>
    <ligand>
        <name>phosphoenolpyruvate</name>
        <dbReference type="ChEBI" id="CHEBI:58702"/>
    </ligand>
</feature>
<feature type="binding site" evidence="1">
    <location>
        <position position="93"/>
    </location>
    <ligand>
        <name>UDP-N-acetyl-alpha-D-glucosamine</name>
        <dbReference type="ChEBI" id="CHEBI:57705"/>
    </ligand>
</feature>
<feature type="binding site" evidence="1">
    <location>
        <begin position="122"/>
        <end position="126"/>
    </location>
    <ligand>
        <name>UDP-N-acetyl-alpha-D-glucosamine</name>
        <dbReference type="ChEBI" id="CHEBI:57705"/>
    </ligand>
</feature>
<feature type="binding site" evidence="1">
    <location>
        <position position="305"/>
    </location>
    <ligand>
        <name>UDP-N-acetyl-alpha-D-glucosamine</name>
        <dbReference type="ChEBI" id="CHEBI:57705"/>
    </ligand>
</feature>
<feature type="binding site" evidence="1">
    <location>
        <position position="327"/>
    </location>
    <ligand>
        <name>UDP-N-acetyl-alpha-D-glucosamine</name>
        <dbReference type="ChEBI" id="CHEBI:57705"/>
    </ligand>
</feature>
<feature type="modified residue" description="2-(S-cysteinyl)pyruvic acid O-phosphothioketal" evidence="1">
    <location>
        <position position="117"/>
    </location>
</feature>
<name>MURA_BORPD</name>
<reference key="1">
    <citation type="journal article" date="2008" name="BMC Genomics">
        <title>The missing link: Bordetella petrii is endowed with both the metabolic versatility of environmental bacteria and virulence traits of pathogenic Bordetellae.</title>
        <authorList>
            <person name="Gross R."/>
            <person name="Guzman C.A."/>
            <person name="Sebaihia M."/>
            <person name="Martin dos Santos V.A.P."/>
            <person name="Pieper D.H."/>
            <person name="Koebnik R."/>
            <person name="Lechner M."/>
            <person name="Bartels D."/>
            <person name="Buhrmester J."/>
            <person name="Choudhuri J.V."/>
            <person name="Ebensen T."/>
            <person name="Gaigalat L."/>
            <person name="Herrmann S."/>
            <person name="Khachane A.N."/>
            <person name="Larisch C."/>
            <person name="Link S."/>
            <person name="Linke B."/>
            <person name="Meyer F."/>
            <person name="Mormann S."/>
            <person name="Nakunst D."/>
            <person name="Rueckert C."/>
            <person name="Schneiker-Bekel S."/>
            <person name="Schulze K."/>
            <person name="Voerholter F.-J."/>
            <person name="Yevsa T."/>
            <person name="Engle J.T."/>
            <person name="Goldman W.E."/>
            <person name="Puehler A."/>
            <person name="Goebel U.B."/>
            <person name="Goesmann A."/>
            <person name="Bloecker H."/>
            <person name="Kaiser O."/>
            <person name="Martinez-Arias R."/>
        </authorList>
    </citation>
    <scope>NUCLEOTIDE SEQUENCE [LARGE SCALE GENOMIC DNA]</scope>
    <source>
        <strain>ATCC BAA-461 / DSM 12804 / CCUG 43448</strain>
    </source>
</reference>
<proteinExistence type="inferred from homology"/>
<evidence type="ECO:0000255" key="1">
    <source>
        <dbReference type="HAMAP-Rule" id="MF_00111"/>
    </source>
</evidence>
<protein>
    <recommendedName>
        <fullName evidence="1">UDP-N-acetylglucosamine 1-carboxyvinyltransferase</fullName>
        <ecNumber evidence="1">2.5.1.7</ecNumber>
    </recommendedName>
    <alternativeName>
        <fullName evidence="1">Enoylpyruvate transferase</fullName>
    </alternativeName>
    <alternativeName>
        <fullName evidence="1">UDP-N-acetylglucosamine enolpyruvyl transferase</fullName>
        <shortName evidence="1">EPT</shortName>
    </alternativeName>
</protein>
<organism>
    <name type="scientific">Bordetella petrii (strain ATCC BAA-461 / DSM 12804 / CCUG 43448)</name>
    <dbReference type="NCBI Taxonomy" id="340100"/>
    <lineage>
        <taxon>Bacteria</taxon>
        <taxon>Pseudomonadati</taxon>
        <taxon>Pseudomonadota</taxon>
        <taxon>Betaproteobacteria</taxon>
        <taxon>Burkholderiales</taxon>
        <taxon>Alcaligenaceae</taxon>
        <taxon>Bordetella</taxon>
    </lineage>
</organism>
<sequence length="422" mass="44537">MDKLRITGGAQLRGEVTISGAKNSALPILCAGLLTADPLVLANVPDLNDTSTMLRLLGRMGVRAERGADGIVTVQASQVDNLEAPYDLVKTMRASILVLGPLLARFGQARVSLPGGCTIGQRPVDQHIKGMAALGADIRIEHGFVVAQAARLKGASIRTDMVTVTGTENLLMAAVLAEGQTVLENAAREPEIVDLAELLIKMGARIQGHGTDRIVIDGVASLHGAEHSVIPDRIEAGTFLCAVGAAGGDITLRNAAPDTLGATLDKLIEAGLTIETGPDWIRGAMQGRPRAVGARTHEYPGFATDMQAQLMALDTVAQGTAVIVENIFENRYMHVQELRRMGADIDIDGHTAVVRGVPRLSGAAVMATDLRASASLVIAGLAAEGQTQVDRIYHLDRGYDRMEVKLRALGANIQRLTGKEPA</sequence>
<comment type="function">
    <text evidence="1">Cell wall formation. Adds enolpyruvyl to UDP-N-acetylglucosamine.</text>
</comment>
<comment type="catalytic activity">
    <reaction evidence="1">
        <text>phosphoenolpyruvate + UDP-N-acetyl-alpha-D-glucosamine = UDP-N-acetyl-3-O-(1-carboxyvinyl)-alpha-D-glucosamine + phosphate</text>
        <dbReference type="Rhea" id="RHEA:18681"/>
        <dbReference type="ChEBI" id="CHEBI:43474"/>
        <dbReference type="ChEBI" id="CHEBI:57705"/>
        <dbReference type="ChEBI" id="CHEBI:58702"/>
        <dbReference type="ChEBI" id="CHEBI:68483"/>
        <dbReference type="EC" id="2.5.1.7"/>
    </reaction>
</comment>
<comment type="pathway">
    <text evidence="1">Cell wall biogenesis; peptidoglycan biosynthesis.</text>
</comment>
<comment type="subcellular location">
    <subcellularLocation>
        <location evidence="1">Cytoplasm</location>
    </subcellularLocation>
</comment>
<comment type="similarity">
    <text evidence="1">Belongs to the EPSP synthase family. MurA subfamily.</text>
</comment>
<dbReference type="EC" id="2.5.1.7" evidence="1"/>
<dbReference type="EMBL" id="AM902716">
    <property type="protein sequence ID" value="CAP40471.1"/>
    <property type="molecule type" value="Genomic_DNA"/>
</dbReference>
<dbReference type="SMR" id="A9HWD9"/>
<dbReference type="STRING" id="94624.Bpet0140"/>
<dbReference type="KEGG" id="bpt:Bpet0140"/>
<dbReference type="eggNOG" id="COG0766">
    <property type="taxonomic scope" value="Bacteria"/>
</dbReference>
<dbReference type="UniPathway" id="UPA00219"/>
<dbReference type="Proteomes" id="UP000001225">
    <property type="component" value="Chromosome"/>
</dbReference>
<dbReference type="GO" id="GO:0005737">
    <property type="term" value="C:cytoplasm"/>
    <property type="evidence" value="ECO:0007669"/>
    <property type="project" value="UniProtKB-SubCell"/>
</dbReference>
<dbReference type="GO" id="GO:0008760">
    <property type="term" value="F:UDP-N-acetylglucosamine 1-carboxyvinyltransferase activity"/>
    <property type="evidence" value="ECO:0007669"/>
    <property type="project" value="UniProtKB-UniRule"/>
</dbReference>
<dbReference type="GO" id="GO:0051301">
    <property type="term" value="P:cell division"/>
    <property type="evidence" value="ECO:0007669"/>
    <property type="project" value="UniProtKB-KW"/>
</dbReference>
<dbReference type="GO" id="GO:0071555">
    <property type="term" value="P:cell wall organization"/>
    <property type="evidence" value="ECO:0007669"/>
    <property type="project" value="UniProtKB-KW"/>
</dbReference>
<dbReference type="GO" id="GO:0009252">
    <property type="term" value="P:peptidoglycan biosynthetic process"/>
    <property type="evidence" value="ECO:0007669"/>
    <property type="project" value="UniProtKB-UniRule"/>
</dbReference>
<dbReference type="GO" id="GO:0008360">
    <property type="term" value="P:regulation of cell shape"/>
    <property type="evidence" value="ECO:0007669"/>
    <property type="project" value="UniProtKB-KW"/>
</dbReference>
<dbReference type="GO" id="GO:0019277">
    <property type="term" value="P:UDP-N-acetylgalactosamine biosynthetic process"/>
    <property type="evidence" value="ECO:0007669"/>
    <property type="project" value="InterPro"/>
</dbReference>
<dbReference type="CDD" id="cd01555">
    <property type="entry name" value="UdpNAET"/>
    <property type="match status" value="1"/>
</dbReference>
<dbReference type="FunFam" id="3.65.10.10:FF:000001">
    <property type="entry name" value="UDP-N-acetylglucosamine 1-carboxyvinyltransferase"/>
    <property type="match status" value="1"/>
</dbReference>
<dbReference type="Gene3D" id="3.65.10.10">
    <property type="entry name" value="Enolpyruvate transferase domain"/>
    <property type="match status" value="2"/>
</dbReference>
<dbReference type="HAMAP" id="MF_00111">
    <property type="entry name" value="MurA"/>
    <property type="match status" value="1"/>
</dbReference>
<dbReference type="InterPro" id="IPR001986">
    <property type="entry name" value="Enolpyruvate_Tfrase_dom"/>
</dbReference>
<dbReference type="InterPro" id="IPR036968">
    <property type="entry name" value="Enolpyruvate_Tfrase_sf"/>
</dbReference>
<dbReference type="InterPro" id="IPR050068">
    <property type="entry name" value="MurA_subfamily"/>
</dbReference>
<dbReference type="InterPro" id="IPR013792">
    <property type="entry name" value="RNA3'P_cycl/enolpyr_Trfase_a/b"/>
</dbReference>
<dbReference type="InterPro" id="IPR005750">
    <property type="entry name" value="UDP_GlcNAc_COvinyl_MurA"/>
</dbReference>
<dbReference type="NCBIfam" id="TIGR01072">
    <property type="entry name" value="murA"/>
    <property type="match status" value="1"/>
</dbReference>
<dbReference type="NCBIfam" id="NF006873">
    <property type="entry name" value="PRK09369.1"/>
    <property type="match status" value="1"/>
</dbReference>
<dbReference type="PANTHER" id="PTHR43783">
    <property type="entry name" value="UDP-N-ACETYLGLUCOSAMINE 1-CARBOXYVINYLTRANSFERASE"/>
    <property type="match status" value="1"/>
</dbReference>
<dbReference type="PANTHER" id="PTHR43783:SF1">
    <property type="entry name" value="UDP-N-ACETYLGLUCOSAMINE 1-CARBOXYVINYLTRANSFERASE"/>
    <property type="match status" value="1"/>
</dbReference>
<dbReference type="Pfam" id="PF00275">
    <property type="entry name" value="EPSP_synthase"/>
    <property type="match status" value="1"/>
</dbReference>
<dbReference type="SUPFAM" id="SSF55205">
    <property type="entry name" value="EPT/RTPC-like"/>
    <property type="match status" value="1"/>
</dbReference>
<gene>
    <name evidence="1" type="primary">murA</name>
    <name type="ordered locus">Bpet0140</name>
</gene>
<keyword id="KW-0131">Cell cycle</keyword>
<keyword id="KW-0132">Cell division</keyword>
<keyword id="KW-0133">Cell shape</keyword>
<keyword id="KW-0961">Cell wall biogenesis/degradation</keyword>
<keyword id="KW-0963">Cytoplasm</keyword>
<keyword id="KW-0573">Peptidoglycan synthesis</keyword>
<keyword id="KW-0670">Pyruvate</keyword>
<keyword id="KW-0808">Transferase</keyword>